<gene>
    <name type="primary">ndhG</name>
</gene>
<reference key="1">
    <citation type="journal article" date="2008" name="Nucleic Acids Res.">
        <title>The complete nucleotide sequences of the five genetically distinct plastid genomes of Oenothera, subsection Oenothera: I. Sequence evaluation and plastome evolution.</title>
        <authorList>
            <person name="Greiner S."/>
            <person name="Wang X."/>
            <person name="Rauwolf U."/>
            <person name="Silber M.V."/>
            <person name="Mayer K."/>
            <person name="Meurer J."/>
            <person name="Haberer G."/>
            <person name="Herrmann R.G."/>
        </authorList>
    </citation>
    <scope>NUCLEOTIDE SEQUENCE [LARGE SCALE GENOMIC DNA]</scope>
    <source>
        <strain>cv. Rr-lamarckiana Sweden</strain>
    </source>
</reference>
<protein>
    <recommendedName>
        <fullName>NAD(P)H-quinone oxidoreductase subunit 6, chloroplastic</fullName>
        <ecNumber>7.1.1.-</ecNumber>
    </recommendedName>
    <alternativeName>
        <fullName>NAD(P)H dehydrogenase subunit 6</fullName>
    </alternativeName>
    <alternativeName>
        <fullName>NADH-plastoquinone oxidoreductase subunit 6</fullName>
    </alternativeName>
</protein>
<proteinExistence type="inferred from homology"/>
<name>NU6C_OENGL</name>
<sequence length="176" mass="19025">MDLPGPIHDFLLVFLGSGLIVGGLGVVLLTNPIFSAFSLGLVLVCISLFFSLSNSYFVAAAQLLIYVGAINVLILFAVMFMNGSEYSKDLTLWTVGDGITSLVCTSIFISLITTILDTSWYGIIWTTKSNQIIEQDLIGNSQQIGIHLSTDFFLPFELISIILLVSLIGAIAVARQ</sequence>
<organism>
    <name type="scientific">Oenothera glazioviana</name>
    <name type="common">Large-flowered evening primrose</name>
    <name type="synonym">Oenothera erythrosepala</name>
    <dbReference type="NCBI Taxonomy" id="482428"/>
    <lineage>
        <taxon>Eukaryota</taxon>
        <taxon>Viridiplantae</taxon>
        <taxon>Streptophyta</taxon>
        <taxon>Embryophyta</taxon>
        <taxon>Tracheophyta</taxon>
        <taxon>Spermatophyta</taxon>
        <taxon>Magnoliopsida</taxon>
        <taxon>eudicotyledons</taxon>
        <taxon>Gunneridae</taxon>
        <taxon>Pentapetalae</taxon>
        <taxon>rosids</taxon>
        <taxon>malvids</taxon>
        <taxon>Myrtales</taxon>
        <taxon>Onagraceae</taxon>
        <taxon>Onagroideae</taxon>
        <taxon>Onagreae</taxon>
        <taxon>Oenothera</taxon>
    </lineage>
</organism>
<accession>B0Z596</accession>
<comment type="function">
    <text evidence="1">NDH shuttles electrons from NAD(P)H:plastoquinone, via FMN and iron-sulfur (Fe-S) centers, to quinones in the photosynthetic chain and possibly in a chloroplast respiratory chain. The immediate electron acceptor for the enzyme in this species is believed to be plastoquinone. Couples the redox reaction to proton translocation, and thus conserves the redox energy in a proton gradient (By similarity).</text>
</comment>
<comment type="catalytic activity">
    <reaction>
        <text>a plastoquinone + NADH + (n+1) H(+)(in) = a plastoquinol + NAD(+) + n H(+)(out)</text>
        <dbReference type="Rhea" id="RHEA:42608"/>
        <dbReference type="Rhea" id="RHEA-COMP:9561"/>
        <dbReference type="Rhea" id="RHEA-COMP:9562"/>
        <dbReference type="ChEBI" id="CHEBI:15378"/>
        <dbReference type="ChEBI" id="CHEBI:17757"/>
        <dbReference type="ChEBI" id="CHEBI:57540"/>
        <dbReference type="ChEBI" id="CHEBI:57945"/>
        <dbReference type="ChEBI" id="CHEBI:62192"/>
    </reaction>
</comment>
<comment type="catalytic activity">
    <reaction>
        <text>a plastoquinone + NADPH + (n+1) H(+)(in) = a plastoquinol + NADP(+) + n H(+)(out)</text>
        <dbReference type="Rhea" id="RHEA:42612"/>
        <dbReference type="Rhea" id="RHEA-COMP:9561"/>
        <dbReference type="Rhea" id="RHEA-COMP:9562"/>
        <dbReference type="ChEBI" id="CHEBI:15378"/>
        <dbReference type="ChEBI" id="CHEBI:17757"/>
        <dbReference type="ChEBI" id="CHEBI:57783"/>
        <dbReference type="ChEBI" id="CHEBI:58349"/>
        <dbReference type="ChEBI" id="CHEBI:62192"/>
    </reaction>
</comment>
<comment type="subunit">
    <text evidence="1">NDH is composed of at least 16 different subunits, 5 of which are encoded in the nucleus.</text>
</comment>
<comment type="subcellular location">
    <subcellularLocation>
        <location evidence="1">Plastid</location>
        <location evidence="1">Chloroplast thylakoid membrane</location>
        <topology evidence="1">Multi-pass membrane protein</topology>
    </subcellularLocation>
</comment>
<comment type="similarity">
    <text evidence="3">Belongs to the complex I subunit 6 family.</text>
</comment>
<keyword id="KW-0150">Chloroplast</keyword>
<keyword id="KW-0472">Membrane</keyword>
<keyword id="KW-0520">NAD</keyword>
<keyword id="KW-0521">NADP</keyword>
<keyword id="KW-0934">Plastid</keyword>
<keyword id="KW-0618">Plastoquinone</keyword>
<keyword id="KW-0874">Quinone</keyword>
<keyword id="KW-0793">Thylakoid</keyword>
<keyword id="KW-1278">Translocase</keyword>
<keyword id="KW-0812">Transmembrane</keyword>
<keyword id="KW-1133">Transmembrane helix</keyword>
<keyword id="KW-0813">Transport</keyword>
<feature type="chain" id="PRO_0000360278" description="NAD(P)H-quinone oxidoreductase subunit 6, chloroplastic">
    <location>
        <begin position="1"/>
        <end position="176"/>
    </location>
</feature>
<feature type="transmembrane region" description="Helical" evidence="2">
    <location>
        <begin position="10"/>
        <end position="30"/>
    </location>
</feature>
<feature type="transmembrane region" description="Helical" evidence="2">
    <location>
        <begin position="32"/>
        <end position="52"/>
    </location>
</feature>
<feature type="transmembrane region" description="Helical" evidence="2">
    <location>
        <begin position="61"/>
        <end position="81"/>
    </location>
</feature>
<feature type="transmembrane region" description="Helical" evidence="2">
    <location>
        <begin position="92"/>
        <end position="112"/>
    </location>
</feature>
<feature type="transmembrane region" description="Helical" evidence="2">
    <location>
        <begin position="152"/>
        <end position="172"/>
    </location>
</feature>
<geneLocation type="chloroplast"/>
<evidence type="ECO:0000250" key="1"/>
<evidence type="ECO:0000255" key="2"/>
<evidence type="ECO:0000305" key="3"/>
<dbReference type="EC" id="7.1.1.-"/>
<dbReference type="EMBL" id="EU262890">
    <property type="protein sequence ID" value="ABX10089.1"/>
    <property type="molecule type" value="Genomic_DNA"/>
</dbReference>
<dbReference type="RefSeq" id="YP_001687335.1">
    <property type="nucleotide sequence ID" value="NC_010360.2"/>
</dbReference>
<dbReference type="SMR" id="B0Z596"/>
<dbReference type="GeneID" id="5955263"/>
<dbReference type="GO" id="GO:0009535">
    <property type="term" value="C:chloroplast thylakoid membrane"/>
    <property type="evidence" value="ECO:0007669"/>
    <property type="project" value="UniProtKB-SubCell"/>
</dbReference>
<dbReference type="GO" id="GO:0008137">
    <property type="term" value="F:NADH dehydrogenase (ubiquinone) activity"/>
    <property type="evidence" value="ECO:0007669"/>
    <property type="project" value="InterPro"/>
</dbReference>
<dbReference type="GO" id="GO:0048038">
    <property type="term" value="F:quinone binding"/>
    <property type="evidence" value="ECO:0007669"/>
    <property type="project" value="UniProtKB-KW"/>
</dbReference>
<dbReference type="FunFam" id="1.20.120.1200:FF:000002">
    <property type="entry name" value="NAD(P)H-quinone oxidoreductase subunit 6, chloroplastic"/>
    <property type="match status" value="1"/>
</dbReference>
<dbReference type="Gene3D" id="1.20.120.1200">
    <property type="entry name" value="NADH-ubiquinone/plastoquinone oxidoreductase chain 6, subunit NuoJ"/>
    <property type="match status" value="1"/>
</dbReference>
<dbReference type="InterPro" id="IPR050290">
    <property type="entry name" value="NAD(P)H-Q_Oxidoreduct_6"/>
</dbReference>
<dbReference type="InterPro" id="IPR001457">
    <property type="entry name" value="NADH_UbQ/plastoQ_OxRdtase_su6"/>
</dbReference>
<dbReference type="InterPro" id="IPR042106">
    <property type="entry name" value="Nuo/plastoQ_OxRdtase_6_NuoJ"/>
</dbReference>
<dbReference type="PANTHER" id="PTHR48479">
    <property type="entry name" value="NAD(P)H-QUINONE OXIDOREDUCTASE SUBUNIT 6, CHLOROPLASTIC"/>
    <property type="match status" value="1"/>
</dbReference>
<dbReference type="PANTHER" id="PTHR48479:SF1">
    <property type="entry name" value="NAD(P)H-QUINONE OXIDOREDUCTASE SUBUNIT 6, CHLOROPLASTIC"/>
    <property type="match status" value="1"/>
</dbReference>
<dbReference type="Pfam" id="PF00499">
    <property type="entry name" value="Oxidored_q3"/>
    <property type="match status" value="1"/>
</dbReference>